<dbReference type="EC" id="3.1.-.-" evidence="1"/>
<dbReference type="EMBL" id="BX842649">
    <property type="protein sequence ID" value="CAE79098.1"/>
    <property type="molecule type" value="Genomic_DNA"/>
</dbReference>
<dbReference type="RefSeq" id="WP_011163700.1">
    <property type="nucleotide sequence ID" value="NC_005363.1"/>
</dbReference>
<dbReference type="SMR" id="Q6MNQ3"/>
<dbReference type="STRING" id="264462.Bd1188"/>
<dbReference type="GeneID" id="93012226"/>
<dbReference type="KEGG" id="bba:Bd1188"/>
<dbReference type="eggNOG" id="COG1418">
    <property type="taxonomic scope" value="Bacteria"/>
</dbReference>
<dbReference type="HOGENOM" id="CLU_028328_1_0_7"/>
<dbReference type="Proteomes" id="UP000008080">
    <property type="component" value="Chromosome"/>
</dbReference>
<dbReference type="GO" id="GO:0005886">
    <property type="term" value="C:plasma membrane"/>
    <property type="evidence" value="ECO:0007669"/>
    <property type="project" value="UniProtKB-SubCell"/>
</dbReference>
<dbReference type="GO" id="GO:0003723">
    <property type="term" value="F:RNA binding"/>
    <property type="evidence" value="ECO:0007669"/>
    <property type="project" value="UniProtKB-UniRule"/>
</dbReference>
<dbReference type="GO" id="GO:0004521">
    <property type="term" value="F:RNA endonuclease activity"/>
    <property type="evidence" value="ECO:0007669"/>
    <property type="project" value="UniProtKB-UniRule"/>
</dbReference>
<dbReference type="GO" id="GO:0006402">
    <property type="term" value="P:mRNA catabolic process"/>
    <property type="evidence" value="ECO:0007669"/>
    <property type="project" value="UniProtKB-UniRule"/>
</dbReference>
<dbReference type="CDD" id="cd22431">
    <property type="entry name" value="KH-I_RNaseY"/>
    <property type="match status" value="1"/>
</dbReference>
<dbReference type="CDD" id="cd12087">
    <property type="entry name" value="TM_EGFR-like"/>
    <property type="match status" value="1"/>
</dbReference>
<dbReference type="Gene3D" id="1.10.3210.10">
    <property type="entry name" value="Hypothetical protein af1432"/>
    <property type="match status" value="1"/>
</dbReference>
<dbReference type="Gene3D" id="3.30.1370.10">
    <property type="entry name" value="K Homology domain, type 1"/>
    <property type="match status" value="1"/>
</dbReference>
<dbReference type="HAMAP" id="MF_00335">
    <property type="entry name" value="RNase_Y"/>
    <property type="match status" value="1"/>
</dbReference>
<dbReference type="InterPro" id="IPR006674">
    <property type="entry name" value="HD_domain"/>
</dbReference>
<dbReference type="InterPro" id="IPR006675">
    <property type="entry name" value="HDIG_dom"/>
</dbReference>
<dbReference type="InterPro" id="IPR004087">
    <property type="entry name" value="KH_dom"/>
</dbReference>
<dbReference type="InterPro" id="IPR004088">
    <property type="entry name" value="KH_dom_type_1"/>
</dbReference>
<dbReference type="InterPro" id="IPR036612">
    <property type="entry name" value="KH_dom_type_1_sf"/>
</dbReference>
<dbReference type="InterPro" id="IPR017705">
    <property type="entry name" value="Ribonuclease_Y"/>
</dbReference>
<dbReference type="InterPro" id="IPR022711">
    <property type="entry name" value="RNase_Y_N"/>
</dbReference>
<dbReference type="NCBIfam" id="TIGR00277">
    <property type="entry name" value="HDIG"/>
    <property type="match status" value="1"/>
</dbReference>
<dbReference type="NCBIfam" id="TIGR03319">
    <property type="entry name" value="RNase_Y"/>
    <property type="match status" value="1"/>
</dbReference>
<dbReference type="PANTHER" id="PTHR12826">
    <property type="entry name" value="RIBONUCLEASE Y"/>
    <property type="match status" value="1"/>
</dbReference>
<dbReference type="PANTHER" id="PTHR12826:SF15">
    <property type="entry name" value="RIBONUCLEASE Y"/>
    <property type="match status" value="1"/>
</dbReference>
<dbReference type="Pfam" id="PF01966">
    <property type="entry name" value="HD"/>
    <property type="match status" value="1"/>
</dbReference>
<dbReference type="Pfam" id="PF00013">
    <property type="entry name" value="KH_1"/>
    <property type="match status" value="1"/>
</dbReference>
<dbReference type="Pfam" id="PF12072">
    <property type="entry name" value="RNase_Y_N"/>
    <property type="match status" value="1"/>
</dbReference>
<dbReference type="SMART" id="SM00322">
    <property type="entry name" value="KH"/>
    <property type="match status" value="1"/>
</dbReference>
<dbReference type="SUPFAM" id="SSF54791">
    <property type="entry name" value="Eukaryotic type KH-domain (KH-domain type I)"/>
    <property type="match status" value="1"/>
</dbReference>
<dbReference type="SUPFAM" id="SSF109604">
    <property type="entry name" value="HD-domain/PDEase-like"/>
    <property type="match status" value="1"/>
</dbReference>
<dbReference type="PROSITE" id="PS51831">
    <property type="entry name" value="HD"/>
    <property type="match status" value="1"/>
</dbReference>
<dbReference type="PROSITE" id="PS50084">
    <property type="entry name" value="KH_TYPE_1"/>
    <property type="match status" value="1"/>
</dbReference>
<sequence>MEIVISAIIGLLIGGTVVFVIKRLQDNNKKKSARFEAERIVNKANSEAAKIKKESENKAKDFESRARKNVEQDIHKQKSTLKNKESQLERRLKEVEDQFKQKMEENERYLNSLKDREEKIAISENRIKDLEKKGEAHIGELKQKLESVAAMSQDEARRQLLTALEDEAKQEAAKKIAQIEEEANKESEKKAKRILATALSRFASEYTSERTVSVLALPNDEMKGKIIGREGRNIRTLEAHCGVDLIVDDTPEAVVISGFDPVRRELARRTIEKLMEDGRVHPARIEEVAEKQRNELMKSMKEEGERHVMELGIPNMHPELVKIIGGLKYRSYQGQNALNQSLEVATIAGLLAAELGVSVKLARRAGLLHNIGKAIDHTVEGSYAFVGAEAAKKYNESEDVCHAIRAHDEEEKPHSILAWIVHAAYTLSSSRPGARRPQMDTFIHRLEDLESIGNSFDGVLKTLALQAGKDIRVLVESSRVTDDQAVMLSRDIARKIEREMPQAGQVKVTVVRETRSVEHAR</sequence>
<evidence type="ECO:0000255" key="1">
    <source>
        <dbReference type="HAMAP-Rule" id="MF_00335"/>
    </source>
</evidence>
<evidence type="ECO:0000255" key="2">
    <source>
        <dbReference type="PROSITE-ProRule" id="PRU01175"/>
    </source>
</evidence>
<evidence type="ECO:0000256" key="3">
    <source>
        <dbReference type="SAM" id="MobiDB-lite"/>
    </source>
</evidence>
<protein>
    <recommendedName>
        <fullName evidence="1">Ribonuclease Y 1</fullName>
        <shortName evidence="1">RNase Y 1</shortName>
        <ecNumber evidence="1">3.1.-.-</ecNumber>
    </recommendedName>
</protein>
<keyword id="KW-1003">Cell membrane</keyword>
<keyword id="KW-0255">Endonuclease</keyword>
<keyword id="KW-0378">Hydrolase</keyword>
<keyword id="KW-0472">Membrane</keyword>
<keyword id="KW-0540">Nuclease</keyword>
<keyword id="KW-1185">Reference proteome</keyword>
<keyword id="KW-0694">RNA-binding</keyword>
<keyword id="KW-0812">Transmembrane</keyword>
<keyword id="KW-1133">Transmembrane helix</keyword>
<gene>
    <name evidence="1" type="primary">rny1</name>
    <name type="ordered locus">Bd1188</name>
</gene>
<accession>Q6MNQ3</accession>
<reference key="1">
    <citation type="journal article" date="2004" name="Science">
        <title>A predator unmasked: life cycle of Bdellovibrio bacteriovorus from a genomic perspective.</title>
        <authorList>
            <person name="Rendulic S."/>
            <person name="Jagtap P."/>
            <person name="Rosinus A."/>
            <person name="Eppinger M."/>
            <person name="Baar C."/>
            <person name="Lanz C."/>
            <person name="Keller H."/>
            <person name="Lambert C."/>
            <person name="Evans K.J."/>
            <person name="Goesmann A."/>
            <person name="Meyer F."/>
            <person name="Sockett R.E."/>
            <person name="Schuster S.C."/>
        </authorList>
    </citation>
    <scope>NUCLEOTIDE SEQUENCE [LARGE SCALE GENOMIC DNA]</scope>
    <source>
        <strain>ATCC 15356 / DSM 50701 / NCIMB 9529 / HD100</strain>
    </source>
</reference>
<name>RNY1_BDEBA</name>
<comment type="function">
    <text evidence="1">Endoribonuclease that initiates mRNA decay.</text>
</comment>
<comment type="subcellular location">
    <subcellularLocation>
        <location evidence="1">Cell membrane</location>
        <topology evidence="1">Single-pass membrane protein</topology>
    </subcellularLocation>
</comment>
<comment type="similarity">
    <text evidence="1">Belongs to the RNase Y family.</text>
</comment>
<organism>
    <name type="scientific">Bdellovibrio bacteriovorus (strain ATCC 15356 / DSM 50701 / NCIMB 9529 / HD100)</name>
    <dbReference type="NCBI Taxonomy" id="264462"/>
    <lineage>
        <taxon>Bacteria</taxon>
        <taxon>Pseudomonadati</taxon>
        <taxon>Bdellovibrionota</taxon>
        <taxon>Bdellovibrionia</taxon>
        <taxon>Bdellovibrionales</taxon>
        <taxon>Pseudobdellovibrionaceae</taxon>
        <taxon>Bdellovibrio</taxon>
    </lineage>
</organism>
<feature type="chain" id="PRO_0000344827" description="Ribonuclease Y 1">
    <location>
        <begin position="1"/>
        <end position="521"/>
    </location>
</feature>
<feature type="transmembrane region" description="Helical" evidence="1">
    <location>
        <begin position="1"/>
        <end position="21"/>
    </location>
</feature>
<feature type="domain" description="KH" evidence="1">
    <location>
        <begin position="211"/>
        <end position="271"/>
    </location>
</feature>
<feature type="domain" description="HD" evidence="2">
    <location>
        <begin position="337"/>
        <end position="430"/>
    </location>
</feature>
<feature type="region of interest" description="Disordered" evidence="3">
    <location>
        <begin position="51"/>
        <end position="87"/>
    </location>
</feature>
<proteinExistence type="inferred from homology"/>